<protein>
    <recommendedName>
        <fullName evidence="1">Exodeoxyribonuclease 7 small subunit</fullName>
        <ecNumber evidence="1">3.1.11.6</ecNumber>
    </recommendedName>
    <alternativeName>
        <fullName evidence="1">Exodeoxyribonuclease VII small subunit</fullName>
        <shortName evidence="1">Exonuclease VII small subunit</shortName>
    </alternativeName>
</protein>
<evidence type="ECO:0000255" key="1">
    <source>
        <dbReference type="HAMAP-Rule" id="MF_00337"/>
    </source>
</evidence>
<dbReference type="EC" id="3.1.11.6" evidence="1"/>
<dbReference type="EMBL" id="AM408590">
    <property type="protein sequence ID" value="CAL71154.1"/>
    <property type="molecule type" value="Genomic_DNA"/>
</dbReference>
<dbReference type="RefSeq" id="WP_003405844.1">
    <property type="nucleotide sequence ID" value="NC_008769.1"/>
</dbReference>
<dbReference type="SMR" id="A1KHP7"/>
<dbReference type="KEGG" id="mbb:BCG_1167c"/>
<dbReference type="HOGENOM" id="CLU_145918_0_2_11"/>
<dbReference type="Proteomes" id="UP000001472">
    <property type="component" value="Chromosome"/>
</dbReference>
<dbReference type="GO" id="GO:0005829">
    <property type="term" value="C:cytosol"/>
    <property type="evidence" value="ECO:0007669"/>
    <property type="project" value="TreeGrafter"/>
</dbReference>
<dbReference type="GO" id="GO:0009318">
    <property type="term" value="C:exodeoxyribonuclease VII complex"/>
    <property type="evidence" value="ECO:0007669"/>
    <property type="project" value="InterPro"/>
</dbReference>
<dbReference type="GO" id="GO:0008855">
    <property type="term" value="F:exodeoxyribonuclease VII activity"/>
    <property type="evidence" value="ECO:0007669"/>
    <property type="project" value="UniProtKB-UniRule"/>
</dbReference>
<dbReference type="GO" id="GO:0006308">
    <property type="term" value="P:DNA catabolic process"/>
    <property type="evidence" value="ECO:0007669"/>
    <property type="project" value="UniProtKB-UniRule"/>
</dbReference>
<dbReference type="FunFam" id="1.10.287.1040:FF:000004">
    <property type="entry name" value="Exodeoxyribonuclease 7 small subunit"/>
    <property type="match status" value="1"/>
</dbReference>
<dbReference type="Gene3D" id="1.10.287.1040">
    <property type="entry name" value="Exonuclease VII, small subunit"/>
    <property type="match status" value="1"/>
</dbReference>
<dbReference type="HAMAP" id="MF_00337">
    <property type="entry name" value="Exonuc_7_S"/>
    <property type="match status" value="1"/>
</dbReference>
<dbReference type="InterPro" id="IPR003761">
    <property type="entry name" value="Exonuc_VII_S"/>
</dbReference>
<dbReference type="InterPro" id="IPR037004">
    <property type="entry name" value="Exonuc_VII_ssu_sf"/>
</dbReference>
<dbReference type="NCBIfam" id="NF002139">
    <property type="entry name" value="PRK00977.1-3"/>
    <property type="match status" value="1"/>
</dbReference>
<dbReference type="NCBIfam" id="TIGR01280">
    <property type="entry name" value="xseB"/>
    <property type="match status" value="1"/>
</dbReference>
<dbReference type="PANTHER" id="PTHR34137">
    <property type="entry name" value="EXODEOXYRIBONUCLEASE 7 SMALL SUBUNIT"/>
    <property type="match status" value="1"/>
</dbReference>
<dbReference type="PANTHER" id="PTHR34137:SF1">
    <property type="entry name" value="EXODEOXYRIBONUCLEASE 7 SMALL SUBUNIT"/>
    <property type="match status" value="1"/>
</dbReference>
<dbReference type="Pfam" id="PF02609">
    <property type="entry name" value="Exonuc_VII_S"/>
    <property type="match status" value="1"/>
</dbReference>
<dbReference type="PIRSF" id="PIRSF006488">
    <property type="entry name" value="Exonuc_VII_S"/>
    <property type="match status" value="1"/>
</dbReference>
<dbReference type="SUPFAM" id="SSF116842">
    <property type="entry name" value="XseB-like"/>
    <property type="match status" value="1"/>
</dbReference>
<comment type="function">
    <text evidence="1">Bidirectionally degrades single-stranded DNA into large acid-insoluble oligonucleotides, which are then degraded further into small acid-soluble oligonucleotides.</text>
</comment>
<comment type="catalytic activity">
    <reaction evidence="1">
        <text>Exonucleolytic cleavage in either 5'- to 3'- or 3'- to 5'-direction to yield nucleoside 5'-phosphates.</text>
        <dbReference type="EC" id="3.1.11.6"/>
    </reaction>
</comment>
<comment type="subunit">
    <text evidence="1">Heterooligomer composed of large and small subunits.</text>
</comment>
<comment type="subcellular location">
    <subcellularLocation>
        <location evidence="1">Cytoplasm</location>
    </subcellularLocation>
</comment>
<comment type="similarity">
    <text evidence="1">Belongs to the XseB family.</text>
</comment>
<accession>A1KHP7</accession>
<reference key="1">
    <citation type="journal article" date="2007" name="Proc. Natl. Acad. Sci. U.S.A.">
        <title>Genome plasticity of BCG and impact on vaccine efficacy.</title>
        <authorList>
            <person name="Brosch R."/>
            <person name="Gordon S.V."/>
            <person name="Garnier T."/>
            <person name="Eiglmeier K."/>
            <person name="Frigui W."/>
            <person name="Valenti P."/>
            <person name="Dos Santos S."/>
            <person name="Duthoy S."/>
            <person name="Lacroix C."/>
            <person name="Garcia-Pelayo C."/>
            <person name="Inwald J.K."/>
            <person name="Golby P."/>
            <person name="Garcia J.N."/>
            <person name="Hewinson R.G."/>
            <person name="Behr M.A."/>
            <person name="Quail M.A."/>
            <person name="Churcher C."/>
            <person name="Barrell B.G."/>
            <person name="Parkhill J."/>
            <person name="Cole S.T."/>
        </authorList>
    </citation>
    <scope>NUCLEOTIDE SEQUENCE [LARGE SCALE GENOMIC DNA]</scope>
    <source>
        <strain>BCG / Pasteur 1173P2</strain>
    </source>
</reference>
<gene>
    <name evidence="1" type="primary">xseB</name>
    <name type="ordered locus">BCG_1167c</name>
</gene>
<feature type="chain" id="PRO_0000303725" description="Exodeoxyribonuclease 7 small subunit">
    <location>
        <begin position="1"/>
        <end position="85"/>
    </location>
</feature>
<organism>
    <name type="scientific">Mycobacterium bovis (strain BCG / Pasteur 1173P2)</name>
    <dbReference type="NCBI Taxonomy" id="410289"/>
    <lineage>
        <taxon>Bacteria</taxon>
        <taxon>Bacillati</taxon>
        <taxon>Actinomycetota</taxon>
        <taxon>Actinomycetes</taxon>
        <taxon>Mycobacteriales</taxon>
        <taxon>Mycobacteriaceae</taxon>
        <taxon>Mycobacterium</taxon>
        <taxon>Mycobacterium tuberculosis complex</taxon>
    </lineage>
</organism>
<sequence length="85" mass="9322">MVCDPNGDDTGRTHATVPVSQLGYEACRDELMEVVRLLEQGGLDLDASLRLWERGEQLAKRCEEHLAGARQRVSDVLAGDEAQNG</sequence>
<proteinExistence type="inferred from homology"/>
<name>EX7S_MYCBP</name>
<keyword id="KW-0963">Cytoplasm</keyword>
<keyword id="KW-0269">Exonuclease</keyword>
<keyword id="KW-0378">Hydrolase</keyword>
<keyword id="KW-0540">Nuclease</keyword>